<protein>
    <recommendedName>
        <fullName evidence="1">DNA replication and repair protein RecF</fullName>
    </recommendedName>
</protein>
<gene>
    <name evidence="1" type="primary">recF</name>
    <name type="ordered locus">Psyr_0003</name>
</gene>
<reference key="1">
    <citation type="journal article" date="2005" name="Proc. Natl. Acad. Sci. U.S.A.">
        <title>Comparison of the complete genome sequences of Pseudomonas syringae pv. syringae B728a and pv. tomato DC3000.</title>
        <authorList>
            <person name="Feil H."/>
            <person name="Feil W.S."/>
            <person name="Chain P."/>
            <person name="Larimer F."/>
            <person name="Dibartolo G."/>
            <person name="Copeland A."/>
            <person name="Lykidis A."/>
            <person name="Trong S."/>
            <person name="Nolan M."/>
            <person name="Goltsman E."/>
            <person name="Thiel J."/>
            <person name="Malfatti S."/>
            <person name="Loper J.E."/>
            <person name="Lapidus A."/>
            <person name="Detter J.C."/>
            <person name="Land M."/>
            <person name="Richardson P.M."/>
            <person name="Kyrpides N.C."/>
            <person name="Ivanova N."/>
            <person name="Lindow S.E."/>
        </authorList>
    </citation>
    <scope>NUCLEOTIDE SEQUENCE [LARGE SCALE GENOMIC DNA]</scope>
    <source>
        <strain>B728a</strain>
    </source>
</reference>
<feature type="chain" id="PRO_0000236137" description="DNA replication and repair protein RecF">
    <location>
        <begin position="1"/>
        <end position="367"/>
    </location>
</feature>
<feature type="binding site" evidence="1">
    <location>
        <begin position="30"/>
        <end position="37"/>
    </location>
    <ligand>
        <name>ATP</name>
        <dbReference type="ChEBI" id="CHEBI:30616"/>
    </ligand>
</feature>
<name>RECF_PSEU2</name>
<evidence type="ECO:0000255" key="1">
    <source>
        <dbReference type="HAMAP-Rule" id="MF_00365"/>
    </source>
</evidence>
<proteinExistence type="inferred from homology"/>
<accession>Q500U5</accession>
<sequence length="367" mass="41579">MSLSRVSVTGVRNLHPVTLSPSPRINILYGANGSGKTSVLEAIHLLGIARSFRSSRLLPVIQYEQPSCTVFGQVDLAQGGHSNLGVSRDRQGEFQIRIDGQNARSAAQLAEILPLQLINPDSFRLLEGAPKIRRQFLDWGVFHVEPRFMATWQRLQKALKQRNSWLRHGTLDAASQAAWDRELCSASDEIDEFRRAYIKALKPVFEQTLSELVELEGLTLSYYRGWDKEKELSTVLASSIHRDQQMGHTQAGPQRADLRLRLGAHNAADILSRGQQKLVVCALRIAQGHLVSQVRRGQCIYLVDDLPSELDDNHRRALCRLLEELRCQVFITCVDQEFLREGWQTETPVALFHVEQGRITQTHDHRE</sequence>
<comment type="function">
    <text evidence="1">The RecF protein is involved in DNA metabolism; it is required for DNA replication and normal SOS inducibility. RecF binds preferentially to single-stranded, linear DNA. It also seems to bind ATP.</text>
</comment>
<comment type="subcellular location">
    <subcellularLocation>
        <location evidence="1">Cytoplasm</location>
    </subcellularLocation>
</comment>
<comment type="similarity">
    <text evidence="1">Belongs to the RecF family.</text>
</comment>
<organism>
    <name type="scientific">Pseudomonas syringae pv. syringae (strain B728a)</name>
    <dbReference type="NCBI Taxonomy" id="205918"/>
    <lineage>
        <taxon>Bacteria</taxon>
        <taxon>Pseudomonadati</taxon>
        <taxon>Pseudomonadota</taxon>
        <taxon>Gammaproteobacteria</taxon>
        <taxon>Pseudomonadales</taxon>
        <taxon>Pseudomonadaceae</taxon>
        <taxon>Pseudomonas</taxon>
        <taxon>Pseudomonas syringae</taxon>
    </lineage>
</organism>
<dbReference type="EMBL" id="CP000075">
    <property type="protein sequence ID" value="AAY35077.1"/>
    <property type="molecule type" value="Genomic_DNA"/>
</dbReference>
<dbReference type="RefSeq" id="WP_011266123.1">
    <property type="nucleotide sequence ID" value="NC_007005.1"/>
</dbReference>
<dbReference type="RefSeq" id="YP_233115.1">
    <property type="nucleotide sequence ID" value="NC_007005.1"/>
</dbReference>
<dbReference type="SMR" id="Q500U5"/>
<dbReference type="STRING" id="205918.Psyr_0003"/>
<dbReference type="KEGG" id="psb:Psyr_0003"/>
<dbReference type="PATRIC" id="fig|205918.7.peg.3"/>
<dbReference type="eggNOG" id="COG1195">
    <property type="taxonomic scope" value="Bacteria"/>
</dbReference>
<dbReference type="HOGENOM" id="CLU_040267_0_0_6"/>
<dbReference type="OrthoDB" id="9803889at2"/>
<dbReference type="Proteomes" id="UP000000426">
    <property type="component" value="Chromosome"/>
</dbReference>
<dbReference type="GO" id="GO:0005737">
    <property type="term" value="C:cytoplasm"/>
    <property type="evidence" value="ECO:0007669"/>
    <property type="project" value="UniProtKB-SubCell"/>
</dbReference>
<dbReference type="GO" id="GO:0005524">
    <property type="term" value="F:ATP binding"/>
    <property type="evidence" value="ECO:0007669"/>
    <property type="project" value="UniProtKB-UniRule"/>
</dbReference>
<dbReference type="GO" id="GO:0003697">
    <property type="term" value="F:single-stranded DNA binding"/>
    <property type="evidence" value="ECO:0007669"/>
    <property type="project" value="UniProtKB-UniRule"/>
</dbReference>
<dbReference type="GO" id="GO:0006260">
    <property type="term" value="P:DNA replication"/>
    <property type="evidence" value="ECO:0007669"/>
    <property type="project" value="UniProtKB-UniRule"/>
</dbReference>
<dbReference type="GO" id="GO:0000731">
    <property type="term" value="P:DNA synthesis involved in DNA repair"/>
    <property type="evidence" value="ECO:0007669"/>
    <property type="project" value="TreeGrafter"/>
</dbReference>
<dbReference type="GO" id="GO:0006302">
    <property type="term" value="P:double-strand break repair"/>
    <property type="evidence" value="ECO:0007669"/>
    <property type="project" value="TreeGrafter"/>
</dbReference>
<dbReference type="GO" id="GO:0009432">
    <property type="term" value="P:SOS response"/>
    <property type="evidence" value="ECO:0007669"/>
    <property type="project" value="UniProtKB-UniRule"/>
</dbReference>
<dbReference type="FunFam" id="1.20.1050.90:FF:000003">
    <property type="entry name" value="DNA replication and repair protein RecF"/>
    <property type="match status" value="1"/>
</dbReference>
<dbReference type="Gene3D" id="3.40.50.300">
    <property type="entry name" value="P-loop containing nucleotide triphosphate hydrolases"/>
    <property type="match status" value="1"/>
</dbReference>
<dbReference type="Gene3D" id="1.20.1050.90">
    <property type="entry name" value="RecF/RecN/SMC, N-terminal domain"/>
    <property type="match status" value="1"/>
</dbReference>
<dbReference type="HAMAP" id="MF_00365">
    <property type="entry name" value="RecF"/>
    <property type="match status" value="1"/>
</dbReference>
<dbReference type="InterPro" id="IPR001238">
    <property type="entry name" value="DNA-binding_RecF"/>
</dbReference>
<dbReference type="InterPro" id="IPR018078">
    <property type="entry name" value="DNA-binding_RecF_CS"/>
</dbReference>
<dbReference type="InterPro" id="IPR027417">
    <property type="entry name" value="P-loop_NTPase"/>
</dbReference>
<dbReference type="InterPro" id="IPR003395">
    <property type="entry name" value="RecF/RecN/SMC_N"/>
</dbReference>
<dbReference type="InterPro" id="IPR042174">
    <property type="entry name" value="RecF_2"/>
</dbReference>
<dbReference type="NCBIfam" id="TIGR00611">
    <property type="entry name" value="recf"/>
    <property type="match status" value="1"/>
</dbReference>
<dbReference type="PANTHER" id="PTHR32182">
    <property type="entry name" value="DNA REPLICATION AND REPAIR PROTEIN RECF"/>
    <property type="match status" value="1"/>
</dbReference>
<dbReference type="PANTHER" id="PTHR32182:SF0">
    <property type="entry name" value="DNA REPLICATION AND REPAIR PROTEIN RECF"/>
    <property type="match status" value="1"/>
</dbReference>
<dbReference type="Pfam" id="PF02463">
    <property type="entry name" value="SMC_N"/>
    <property type="match status" value="1"/>
</dbReference>
<dbReference type="SUPFAM" id="SSF52540">
    <property type="entry name" value="P-loop containing nucleoside triphosphate hydrolases"/>
    <property type="match status" value="1"/>
</dbReference>
<dbReference type="PROSITE" id="PS00617">
    <property type="entry name" value="RECF_1"/>
    <property type="match status" value="1"/>
</dbReference>
<dbReference type="PROSITE" id="PS00618">
    <property type="entry name" value="RECF_2"/>
    <property type="match status" value="1"/>
</dbReference>
<keyword id="KW-0067">ATP-binding</keyword>
<keyword id="KW-0963">Cytoplasm</keyword>
<keyword id="KW-0227">DNA damage</keyword>
<keyword id="KW-0234">DNA repair</keyword>
<keyword id="KW-0235">DNA replication</keyword>
<keyword id="KW-0238">DNA-binding</keyword>
<keyword id="KW-0547">Nucleotide-binding</keyword>
<keyword id="KW-0742">SOS response</keyword>